<proteinExistence type="evidence at protein level"/>
<name>MYH13_HUMAN</name>
<accession>Q9UKX3</accession>
<accession>O95252</accession>
<accession>Q9P0U8</accession>
<reference key="1">
    <citation type="journal article" date="1999" name="J. Mol. Biol.">
        <title>Comparative sequence analysis of the complete human sarcomeric myosin heavy chain family: implications for functional diversity.</title>
        <authorList>
            <person name="Weiss A."/>
            <person name="Schiaffino S."/>
            <person name="Leinwand L.A."/>
        </authorList>
    </citation>
    <scope>NUCLEOTIDE SEQUENCE [MRNA]</scope>
    <scope>VARIANTS GLU-1076 AND ARG-1862</scope>
    <source>
        <tissue>Extraocular muscle</tissue>
    </source>
</reference>
<reference key="2">
    <citation type="journal article" date="2006" name="Nature">
        <title>DNA sequence of human chromosome 17 and analysis of rearrangement in the human lineage.</title>
        <authorList>
            <person name="Zody M.C."/>
            <person name="Garber M."/>
            <person name="Adams D.J."/>
            <person name="Sharpe T."/>
            <person name="Harrow J."/>
            <person name="Lupski J.R."/>
            <person name="Nicholson C."/>
            <person name="Searle S.M."/>
            <person name="Wilming L."/>
            <person name="Young S.K."/>
            <person name="Abouelleil A."/>
            <person name="Allen N.R."/>
            <person name="Bi W."/>
            <person name="Bloom T."/>
            <person name="Borowsky M.L."/>
            <person name="Bugalter B.E."/>
            <person name="Butler J."/>
            <person name="Chang J.L."/>
            <person name="Chen C.-K."/>
            <person name="Cook A."/>
            <person name="Corum B."/>
            <person name="Cuomo C.A."/>
            <person name="de Jong P.J."/>
            <person name="DeCaprio D."/>
            <person name="Dewar K."/>
            <person name="FitzGerald M."/>
            <person name="Gilbert J."/>
            <person name="Gibson R."/>
            <person name="Gnerre S."/>
            <person name="Goldstein S."/>
            <person name="Grafham D.V."/>
            <person name="Grocock R."/>
            <person name="Hafez N."/>
            <person name="Hagopian D.S."/>
            <person name="Hart E."/>
            <person name="Norman C.H."/>
            <person name="Humphray S."/>
            <person name="Jaffe D.B."/>
            <person name="Jones M."/>
            <person name="Kamal M."/>
            <person name="Khodiyar V.K."/>
            <person name="LaButti K."/>
            <person name="Laird G."/>
            <person name="Lehoczky J."/>
            <person name="Liu X."/>
            <person name="Lokyitsang T."/>
            <person name="Loveland J."/>
            <person name="Lui A."/>
            <person name="Macdonald P."/>
            <person name="Major J.E."/>
            <person name="Matthews L."/>
            <person name="Mauceli E."/>
            <person name="McCarroll S.A."/>
            <person name="Mihalev A.H."/>
            <person name="Mudge J."/>
            <person name="Nguyen C."/>
            <person name="Nicol R."/>
            <person name="O'Leary S.B."/>
            <person name="Osoegawa K."/>
            <person name="Schwartz D.C."/>
            <person name="Shaw-Smith C."/>
            <person name="Stankiewicz P."/>
            <person name="Steward C."/>
            <person name="Swarbreck D."/>
            <person name="Venkataraman V."/>
            <person name="Whittaker C.A."/>
            <person name="Yang X."/>
            <person name="Zimmer A.R."/>
            <person name="Bradley A."/>
            <person name="Hubbard T."/>
            <person name="Birren B.W."/>
            <person name="Rogers J."/>
            <person name="Lander E.S."/>
            <person name="Nusbaum C."/>
        </authorList>
    </citation>
    <scope>NUCLEOTIDE SEQUENCE [LARGE SCALE GENOMIC DNA]</scope>
</reference>
<reference key="3">
    <citation type="journal article" date="2000" name="J. Muscle Res. Cell Motil.">
        <title>Human skeletal myosin heavy chain genes are tightly linked in the order embryonic-IIa-IId/x-ILb-perinatal-extraocular.</title>
        <authorList>
            <person name="Shrager J.B."/>
            <person name="Desjardins P.R."/>
            <person name="Burkman J.M."/>
            <person name="Konig S.K."/>
            <person name="Stewart S.K."/>
            <person name="Su L."/>
            <person name="Shah M.C."/>
            <person name="Bricklin E."/>
            <person name="Tewari M."/>
            <person name="Hoffman R."/>
            <person name="Rickels M.R."/>
            <person name="Jullian E.H."/>
            <person name="Rubinstein N.A."/>
            <person name="Stedman H.H."/>
        </authorList>
    </citation>
    <scope>NUCLEOTIDE SEQUENCE [GENOMIC DNA] OF 1656-1822</scope>
</reference>
<reference key="4">
    <citation type="journal article" date="1998" name="Genomics">
        <title>The human extraocular muscle myosin heavy chain gene (MYH13) maps to the cluster of fast and developmental myosin genes on chromosome 17.</title>
        <authorList>
            <person name="Winters L.M."/>
            <person name="Briggs M.M."/>
            <person name="Schachat F."/>
        </authorList>
    </citation>
    <scope>NUCLEOTIDE SEQUENCE [GENOMIC DNA] OF 1917-1938</scope>
    <source>
        <tissue>Extraocular muscle</tissue>
    </source>
</reference>
<reference key="5">
    <citation type="journal article" date="2002" name="J. Exp. Biol.">
        <title>Phylogenetic implications of the superfast myosin in extraocular muscles.</title>
        <authorList>
            <person name="Schachat F."/>
            <person name="Briggs M.M."/>
        </authorList>
    </citation>
    <scope>TISSUE SPECIFICITY</scope>
</reference>
<reference key="6">
    <citation type="journal article" date="2013" name="J. Biol. Chem.">
        <title>The superfast human extraocular myosin is kinetically distinct from the fast skeletal IIa, IIb, and IId isoforms.</title>
        <authorList>
            <person name="Bloemink M.J."/>
            <person name="Deacon J.C."/>
            <person name="Resnicow D.I."/>
            <person name="Leinwand L.A."/>
            <person name="Geeves M.A."/>
        </authorList>
    </citation>
    <scope>FUNCTION</scope>
</reference>
<organism>
    <name type="scientific">Homo sapiens</name>
    <name type="common">Human</name>
    <dbReference type="NCBI Taxonomy" id="9606"/>
    <lineage>
        <taxon>Eukaryota</taxon>
        <taxon>Metazoa</taxon>
        <taxon>Chordata</taxon>
        <taxon>Craniata</taxon>
        <taxon>Vertebrata</taxon>
        <taxon>Euteleostomi</taxon>
        <taxon>Mammalia</taxon>
        <taxon>Eutheria</taxon>
        <taxon>Euarchontoglires</taxon>
        <taxon>Primates</taxon>
        <taxon>Haplorrhini</taxon>
        <taxon>Catarrhini</taxon>
        <taxon>Hominidae</taxon>
        <taxon>Homo</taxon>
    </lineage>
</organism>
<evidence type="ECO:0000250" key="1"/>
<evidence type="ECO:0000255" key="2"/>
<evidence type="ECO:0000255" key="3">
    <source>
        <dbReference type="PROSITE-ProRule" id="PRU00116"/>
    </source>
</evidence>
<evidence type="ECO:0000255" key="4">
    <source>
        <dbReference type="PROSITE-ProRule" id="PRU00782"/>
    </source>
</evidence>
<evidence type="ECO:0000255" key="5">
    <source>
        <dbReference type="PROSITE-ProRule" id="PRU01190"/>
    </source>
</evidence>
<evidence type="ECO:0000256" key="6">
    <source>
        <dbReference type="SAM" id="MobiDB-lite"/>
    </source>
</evidence>
<evidence type="ECO:0000269" key="7">
    <source>
    </source>
</evidence>
<evidence type="ECO:0000269" key="8">
    <source>
    </source>
</evidence>
<evidence type="ECO:0000269" key="9">
    <source>
    </source>
</evidence>
<evidence type="ECO:0000305" key="10"/>
<feature type="chain" id="PRO_0000123430" description="Myosin-13">
    <location>
        <begin position="1"/>
        <end position="1938"/>
    </location>
</feature>
<feature type="domain" description="Myosin N-terminal SH3-like" evidence="5">
    <location>
        <begin position="33"/>
        <end position="82"/>
    </location>
</feature>
<feature type="domain" description="Myosin motor" evidence="4">
    <location>
        <begin position="86"/>
        <end position="782"/>
    </location>
</feature>
<feature type="domain" description="IQ" evidence="3">
    <location>
        <begin position="785"/>
        <end position="814"/>
    </location>
</feature>
<feature type="region of interest" description="Actin-binding" evidence="1">
    <location>
        <begin position="659"/>
        <end position="681"/>
    </location>
</feature>
<feature type="region of interest" description="Actin-binding" evidence="1">
    <location>
        <begin position="761"/>
        <end position="775"/>
    </location>
</feature>
<feature type="region of interest" description="Disordered" evidence="6">
    <location>
        <begin position="1917"/>
        <end position="1938"/>
    </location>
</feature>
<feature type="coiled-coil region" evidence="2">
    <location>
        <begin position="843"/>
        <end position="1938"/>
    </location>
</feature>
<feature type="compositionally biased region" description="Basic and acidic residues" evidence="6">
    <location>
        <begin position="1927"/>
        <end position="1938"/>
    </location>
</feature>
<feature type="binding site" evidence="2">
    <location>
        <begin position="179"/>
        <end position="186"/>
    </location>
    <ligand>
        <name>ATP</name>
        <dbReference type="ChEBI" id="CHEBI:30616"/>
    </ligand>
</feature>
<feature type="modified residue" description="N6,N6,N6-trimethyllysine" evidence="2">
    <location>
        <position position="130"/>
    </location>
</feature>
<feature type="sequence variant" id="VAR_030231" description="In dbSNP:rs2190729.">
    <original>G</original>
    <variation>R</variation>
    <location>
        <position position="701"/>
    </location>
</feature>
<feature type="sequence variant" id="VAR_024543" description="In dbSNP:rs2074877.">
    <original>M</original>
    <variation>V</variation>
    <location>
        <position position="1071"/>
    </location>
</feature>
<feature type="sequence variant" id="VAR_030232" description="In dbSNP:rs2074876." evidence="7">
    <original>D</original>
    <variation>E</variation>
    <location>
        <position position="1076"/>
    </location>
</feature>
<feature type="sequence variant" id="VAR_030233" description="In dbSNP:rs17690195.">
    <original>R</original>
    <variation>Q</variation>
    <location>
        <position position="1294"/>
    </location>
</feature>
<feature type="sequence variant" id="VAR_030234" description="In dbSNP:rs3744550." evidence="7">
    <original>H</original>
    <variation>R</variation>
    <location>
        <position position="1862"/>
    </location>
</feature>
<feature type="sequence conflict" description="In Ref. 1; AAD29948." evidence="10" ref="1">
    <original>K</original>
    <variation>R</variation>
    <location>
        <position position="1097"/>
    </location>
</feature>
<feature type="sequence conflict" description="In Ref. 1; AAD29948." evidence="10" ref="1">
    <original>R</original>
    <variation>K</variation>
    <location>
        <position position="1376"/>
    </location>
</feature>
<feature type="sequence conflict" description="In Ref. 1; AAD29948." evidence="10" ref="1">
    <original>N</original>
    <variation>K</variation>
    <location>
        <position position="1407"/>
    </location>
</feature>
<feature type="sequence conflict" description="In Ref. 1; AAD29948." evidence="10" ref="1">
    <original>K</original>
    <variation>R</variation>
    <location>
        <position position="1645"/>
    </location>
</feature>
<sequence length="1938" mass="223605">MSSDAEMAIFGEAAPYLRKPEKERIEAQNRPFDSKKACFVADNKEMYVKGMIQTRENDKVIVKTLDDRMLTLNNDQVFPMNPPKFDKIEDMAMMTHLHEPAVLYNLKERYAAWMIYTYSGLFCVTVNPYKWLPVYKPEVVAAYRGKKRQEAPPHIFSISDNAYQFMLTDRDNQSILITGESGAGKTVNTKRVIQYFATIAVTGDKKKETQPGKMQGTLEDQIIQANPLLEAFGNAKTVRNDNSSRFGKFIRIHFGATGKLASADIETYLLEKSRVTFQLSSERSYHIFYQIMSNKKPELIDLLLISTNPFDFPFVSQGEVTVASIDDSEELLATDNAIDILGFSSEEKVGIYKLTGAVMHYGNMKFKQKQREEQAEPDGTEVADKAGYLMGLNSAEMLKGLCCPRVKVGNEYVTKGQNVQQVTNSVGALAKAVYEKMFLWMVTRINQQLDTKQPRQYFIGVLDIAGFEIFDFNSLEQLCINFTNEKLQQFFNHHMFVLEQEEYKKEGIEWEFIDFGMDLAACIELIEKPMGIFSILEEECMFPKATDTSFKNKLYDQHLGKSNNFQKPKPAKGKAEAHFSLVHYAGTVDYNIAGWLDKNKDPLNETVVGLYQKSSLKLLSFLFSNYAGAETGDSGGSKKGGKKKGSSFQTVSAVFRENLNKLMTNLRSTHPHFVRCLIPNETKTPGVMDHYLVMHQLRCNGVLEGIRICRKGFPSRILYADFKQRYRILNASAIPEGQFIDSKNASEKLLNSIDVDREQFRFGNTKVFFKAGLLGLLEEMRDEKLVTLMTSTQAVCRGYLMRVEFKKMMERRDSIFCIQYNIRSFMNVKHWPWMNLFFKIKPLLKSAEAEKEMATMKEDFERTKEELARSEARRKELEEKMVSLLQEKNDLQLQVQSETENLMDAEERCEGLIKSKILLEAKVKELTERLEEEEEMNSELVAKKRNLEDKCSSLKRDIDDLELTLTKVEKEKHATENKVKNLSEEMTALEENISKLTKEKKSLQEAHQQTLDDLQVEEDKVNGLIKINAKLEQQTDDLEGSLEQEKKLRADLERAKRKLEGDLKMSQESIMDLENDKQQIEEKLKKKEFELSQLQAKIDDEQVHSLQFQKKIKELQARIEELEEEIEAEHTLRAKIEKQRSDLARELEEISERLEEASGATSAQIEMNKKREAEFQKMRRDLEEATLQHEATAATLRKKQADSVAELGEQIDNLQRVKQKLEKEKSELKMEIDDMASNIEALSKSKSNIERTCRTVEDQFSEIKAKDEQQTQLIHDLNMQKARLQTQNGELSHRVEEKESLISQLTKSKQALTQQLEELKRQMEEETKAKNAMAHALQSSRHDCDLLREQYEEEQEAKAELQRALSKANSEVAQWRTKYETDAIQRTEELEEAKKKLAQRLQEAEENTETANSKCASLEKTKQRLQGEVEDLMRDLERSHTACATLDKKQRNFDKVLAEWKQKLDESQAELEAAQKESRSLSTELFKMRNAYEEVVDQLETLRRENKNLQEEISDLTEQIAETGKNLQEAEKTKKLVEQEKSDLQVALEEVEGSLEHEESKILRVQLELSQVKSELDRKVIEKDEEIEQLKRNSQRAAEALQSVLDAEIRSRNDALRLKKKMEGDLNEMEIQLGHSNRQMAETQKHLRTVQGQLKDSQLHLDDALRSNEDLKEQLAIVERRNGLLLEELEEMKVALEQTERTRRLSEQELLDASDRVQLLHSQNTSLINTKKKLEADIAQCQAEVENSIQESRNAEEKAKKAITDAAMMAEELKKEQDTSAHLERMKKNLEQTVKDLQHRLDEAEQLALKGGKKQIQKLENRVRELENELDVEQKRGAEALKGAHKYERKVKEMTYQAEEDHKNILRLQDLVDKLQAKVKSYKRQAEEAEEQANTQLSRCRRVQHELEEAAERADIAESQVNKLRAKSRDVGSQKMEE</sequence>
<protein>
    <recommendedName>
        <fullName>Myosin-13</fullName>
    </recommendedName>
    <alternativeName>
        <fullName>Myosin heavy chain 13</fullName>
    </alternativeName>
    <alternativeName>
        <fullName>Myosin heavy chain, skeletal muscle, extraocular</fullName>
        <shortName>MyHC-EO</shortName>
    </alternativeName>
    <alternativeName>
        <fullName>Myosin heavy chain, skeletal muscle, laryngeal</fullName>
        <shortName>MyHC-IIL</shortName>
    </alternativeName>
    <alternativeName>
        <fullName>Superfast myosin</fullName>
    </alternativeName>
</protein>
<gene>
    <name type="primary">MYH13</name>
</gene>
<comment type="function">
    <text evidence="9">Fast twitching myosin mediating the high-velocity and low-tension contractions of specific striated muscles.</text>
</comment>
<comment type="subunit">
    <text>Muscle myosin is a hexameric protein that consists of 2 heavy chain subunits (MHC), 2 alkali light chain subunits (MLC) and 2 regulatory light chain subunits (MLC-2).</text>
</comment>
<comment type="subcellular location">
    <subcellularLocation>
        <location>Cytoplasm</location>
        <location>Myofibril</location>
    </subcellularLocation>
    <text>Thick filaments of the myofibrils.</text>
</comment>
<comment type="tissue specificity">
    <text evidence="8">Specifically expressed in extraocular and laryngeal muscles.</text>
</comment>
<comment type="domain">
    <text>The rodlike tail sequence is highly repetitive, showing cycles of a 28-residue repeat pattern composed of 4 heptapeptides, characteristic for alpha-helical coiled coils.</text>
</comment>
<comment type="domain">
    <text evidence="10">Limited proteolysis of myosin heavy chain produces 1 light meromyosin (LMM) and 1 heavy meromyosin (HMM). HMM can be further cleaved into 2 globular subfragments (S1) and 1 rod-shaped subfragment (S2).</text>
</comment>
<comment type="domain">
    <text>The head-like domain S1 exhibits a much faster ATP-induced detachment from actin, and ADP affinity is more than 3-fold weaker than other myosins.</text>
</comment>
<comment type="similarity">
    <text evidence="10">Belongs to the TRAFAC class myosin-kinesin ATPase superfamily. Myosin family.</text>
</comment>
<keyword id="KW-0009">Actin-binding</keyword>
<keyword id="KW-0067">ATP-binding</keyword>
<keyword id="KW-0112">Calmodulin-binding</keyword>
<keyword id="KW-0175">Coiled coil</keyword>
<keyword id="KW-0963">Cytoplasm</keyword>
<keyword id="KW-0488">Methylation</keyword>
<keyword id="KW-0505">Motor protein</keyword>
<keyword id="KW-0514">Muscle protein</keyword>
<keyword id="KW-0518">Myosin</keyword>
<keyword id="KW-0547">Nucleotide-binding</keyword>
<keyword id="KW-1267">Proteomics identification</keyword>
<keyword id="KW-1185">Reference proteome</keyword>
<keyword id="KW-0787">Thick filament</keyword>
<dbReference type="EMBL" id="AF111782">
    <property type="protein sequence ID" value="AAD29948.1"/>
    <property type="molecule type" value="mRNA"/>
</dbReference>
<dbReference type="EMBL" id="AC005291">
    <property type="status" value="NOT_ANNOTATED_CDS"/>
    <property type="molecule type" value="Genomic_DNA"/>
</dbReference>
<dbReference type="EMBL" id="AH009397">
    <property type="protein sequence ID" value="AAF73155.1"/>
    <property type="molecule type" value="Genomic_DNA"/>
</dbReference>
<dbReference type="EMBL" id="AF075248">
    <property type="protein sequence ID" value="AAC83241.1"/>
    <property type="molecule type" value="Genomic_DNA"/>
</dbReference>
<dbReference type="CCDS" id="CCDS45613.1"/>
<dbReference type="RefSeq" id="NP_003793.2">
    <property type="nucleotide sequence ID" value="NM_003802.3"/>
</dbReference>
<dbReference type="SMR" id="Q9UKX3"/>
<dbReference type="BioGRID" id="114272">
    <property type="interactions" value="52"/>
</dbReference>
<dbReference type="FunCoup" id="Q9UKX3">
    <property type="interactions" value="294"/>
</dbReference>
<dbReference type="IntAct" id="Q9UKX3">
    <property type="interactions" value="35"/>
</dbReference>
<dbReference type="MINT" id="Q9UKX3"/>
<dbReference type="STRING" id="9606.ENSP00000404570"/>
<dbReference type="iPTMnet" id="Q9UKX3"/>
<dbReference type="PhosphoSitePlus" id="Q9UKX3"/>
<dbReference type="BioMuta" id="MYH13"/>
<dbReference type="DMDM" id="322510049"/>
<dbReference type="jPOST" id="Q9UKX3"/>
<dbReference type="MassIVE" id="Q9UKX3"/>
<dbReference type="PaxDb" id="9606-ENSP00000404570"/>
<dbReference type="PeptideAtlas" id="Q9UKX3"/>
<dbReference type="ProteomicsDB" id="84904"/>
<dbReference type="Antibodypedia" id="3434">
    <property type="antibodies" value="25 antibodies from 13 providers"/>
</dbReference>
<dbReference type="DNASU" id="8735"/>
<dbReference type="Ensembl" id="ENST00000252172.9">
    <property type="protein sequence ID" value="ENSP00000252172.4"/>
    <property type="gene ID" value="ENSG00000006788.14"/>
</dbReference>
<dbReference type="Ensembl" id="ENST00000418404.8">
    <property type="protein sequence ID" value="ENSP00000404570.3"/>
    <property type="gene ID" value="ENSG00000006788.14"/>
</dbReference>
<dbReference type="Ensembl" id="ENST00000621918.1">
    <property type="protein sequence ID" value="ENSP00000480864.1"/>
    <property type="gene ID" value="ENSG00000006788.14"/>
</dbReference>
<dbReference type="GeneID" id="8735"/>
<dbReference type="KEGG" id="hsa:8735"/>
<dbReference type="MANE-Select" id="ENST00000252172.9">
    <property type="protein sequence ID" value="ENSP00000252172.4"/>
    <property type="RefSeq nucleotide sequence ID" value="NM_003802.3"/>
    <property type="RefSeq protein sequence ID" value="NP_003793.2"/>
</dbReference>
<dbReference type="UCSC" id="uc002gmk.1">
    <property type="organism name" value="human"/>
</dbReference>
<dbReference type="AGR" id="HGNC:7571"/>
<dbReference type="CTD" id="8735"/>
<dbReference type="DisGeNET" id="8735"/>
<dbReference type="GeneCards" id="MYH13"/>
<dbReference type="HGNC" id="HGNC:7571">
    <property type="gene designation" value="MYH13"/>
</dbReference>
<dbReference type="HPA" id="ENSG00000006788">
    <property type="expression patterns" value="Tissue enhanced (skeletal muscle, stomach)"/>
</dbReference>
<dbReference type="MIM" id="603487">
    <property type="type" value="gene"/>
</dbReference>
<dbReference type="neXtProt" id="NX_Q9UKX3"/>
<dbReference type="OpenTargets" id="ENSG00000006788"/>
<dbReference type="PharmGKB" id="PA31368"/>
<dbReference type="VEuPathDB" id="HostDB:ENSG00000006788"/>
<dbReference type="eggNOG" id="KOG0161">
    <property type="taxonomic scope" value="Eukaryota"/>
</dbReference>
<dbReference type="GeneTree" id="ENSGT00940000162543"/>
<dbReference type="HOGENOM" id="CLU_000192_8_1_1"/>
<dbReference type="InParanoid" id="Q9UKX3"/>
<dbReference type="OMA" id="TEKMECY"/>
<dbReference type="OrthoDB" id="312459at2759"/>
<dbReference type="PAN-GO" id="Q9UKX3">
    <property type="GO annotations" value="6 GO annotations based on evolutionary models"/>
</dbReference>
<dbReference type="PhylomeDB" id="Q9UKX3"/>
<dbReference type="TreeFam" id="TF314375"/>
<dbReference type="PathwayCommons" id="Q9UKX3"/>
<dbReference type="SignaLink" id="Q9UKX3"/>
<dbReference type="BioGRID-ORCS" id="8735">
    <property type="hits" value="15 hits in 1151 CRISPR screens"/>
</dbReference>
<dbReference type="ChiTaRS" id="MYH13">
    <property type="organism name" value="human"/>
</dbReference>
<dbReference type="GeneWiki" id="MYH13"/>
<dbReference type="GenomeRNAi" id="8735"/>
<dbReference type="Pharos" id="Q9UKX3">
    <property type="development level" value="Tbio"/>
</dbReference>
<dbReference type="PRO" id="PR:Q9UKX3"/>
<dbReference type="Proteomes" id="UP000005640">
    <property type="component" value="Chromosome 17"/>
</dbReference>
<dbReference type="RNAct" id="Q9UKX3">
    <property type="molecule type" value="protein"/>
</dbReference>
<dbReference type="Bgee" id="ENSG00000006788">
    <property type="expression patterns" value="Expressed in primordial germ cell in gonad and 29 other cell types or tissues"/>
</dbReference>
<dbReference type="GO" id="GO:0005737">
    <property type="term" value="C:cytoplasm"/>
    <property type="evidence" value="ECO:0000318"/>
    <property type="project" value="GO_Central"/>
</dbReference>
<dbReference type="GO" id="GO:0070062">
    <property type="term" value="C:extracellular exosome"/>
    <property type="evidence" value="ECO:0007005"/>
    <property type="project" value="UniProtKB"/>
</dbReference>
<dbReference type="GO" id="GO:0005859">
    <property type="term" value="C:muscle myosin complex"/>
    <property type="evidence" value="ECO:0000304"/>
    <property type="project" value="UniProtKB"/>
</dbReference>
<dbReference type="GO" id="GO:0030016">
    <property type="term" value="C:myofibril"/>
    <property type="evidence" value="ECO:0007669"/>
    <property type="project" value="UniProtKB-SubCell"/>
</dbReference>
<dbReference type="GO" id="GO:0032982">
    <property type="term" value="C:myosin filament"/>
    <property type="evidence" value="ECO:0000318"/>
    <property type="project" value="GO_Central"/>
</dbReference>
<dbReference type="GO" id="GO:0016460">
    <property type="term" value="C:myosin II complex"/>
    <property type="evidence" value="ECO:0000318"/>
    <property type="project" value="GO_Central"/>
</dbReference>
<dbReference type="GO" id="GO:0051015">
    <property type="term" value="F:actin filament binding"/>
    <property type="evidence" value="ECO:0000318"/>
    <property type="project" value="GO_Central"/>
</dbReference>
<dbReference type="GO" id="GO:0005524">
    <property type="term" value="F:ATP binding"/>
    <property type="evidence" value="ECO:0007669"/>
    <property type="project" value="UniProtKB-KW"/>
</dbReference>
<dbReference type="GO" id="GO:0005516">
    <property type="term" value="F:calmodulin binding"/>
    <property type="evidence" value="ECO:0007669"/>
    <property type="project" value="UniProtKB-KW"/>
</dbReference>
<dbReference type="GO" id="GO:0000146">
    <property type="term" value="F:microfilament motor activity"/>
    <property type="evidence" value="ECO:0000318"/>
    <property type="project" value="GO_Central"/>
</dbReference>
<dbReference type="GO" id="GO:0009267">
    <property type="term" value="P:cellular response to starvation"/>
    <property type="evidence" value="ECO:0007669"/>
    <property type="project" value="Ensembl"/>
</dbReference>
<dbReference type="GO" id="GO:0006936">
    <property type="term" value="P:muscle contraction"/>
    <property type="evidence" value="ECO:0000318"/>
    <property type="project" value="GO_Central"/>
</dbReference>
<dbReference type="CDD" id="cd14923">
    <property type="entry name" value="MYSc_Myh13"/>
    <property type="match status" value="1"/>
</dbReference>
<dbReference type="FunFam" id="1.10.10.820:FF:000001">
    <property type="entry name" value="Myosin heavy chain"/>
    <property type="match status" value="1"/>
</dbReference>
<dbReference type="FunFam" id="1.20.5.340:FF:000002">
    <property type="entry name" value="Myosin heavy chain"/>
    <property type="match status" value="1"/>
</dbReference>
<dbReference type="FunFam" id="1.20.5.340:FF:000003">
    <property type="entry name" value="Myosin heavy chain"/>
    <property type="match status" value="1"/>
</dbReference>
<dbReference type="FunFam" id="1.20.5.340:FF:000004">
    <property type="entry name" value="Myosin heavy chain"/>
    <property type="match status" value="1"/>
</dbReference>
<dbReference type="FunFam" id="1.20.5.340:FF:000006">
    <property type="entry name" value="Myosin heavy chain"/>
    <property type="match status" value="1"/>
</dbReference>
<dbReference type="FunFam" id="1.20.5.340:FF:000013">
    <property type="entry name" value="Myosin heavy chain"/>
    <property type="match status" value="1"/>
</dbReference>
<dbReference type="FunFam" id="1.20.5.370:FF:000001">
    <property type="entry name" value="Myosin heavy chain"/>
    <property type="match status" value="1"/>
</dbReference>
<dbReference type="FunFam" id="1.20.5.370:FF:000002">
    <property type="entry name" value="Myosin heavy chain"/>
    <property type="match status" value="1"/>
</dbReference>
<dbReference type="FunFam" id="1.20.5.370:FF:000003">
    <property type="entry name" value="Myosin heavy chain"/>
    <property type="match status" value="1"/>
</dbReference>
<dbReference type="FunFam" id="1.20.5.370:FF:000007">
    <property type="entry name" value="Myosin heavy chain"/>
    <property type="match status" value="1"/>
</dbReference>
<dbReference type="FunFam" id="1.20.5.370:FF:000008">
    <property type="entry name" value="Myosin heavy chain"/>
    <property type="match status" value="1"/>
</dbReference>
<dbReference type="FunFam" id="1.20.5.4820:FF:000001">
    <property type="entry name" value="Myosin heavy chain"/>
    <property type="match status" value="1"/>
</dbReference>
<dbReference type="FunFam" id="1.20.58.530:FF:000001">
    <property type="entry name" value="Myosin heavy chain"/>
    <property type="match status" value="1"/>
</dbReference>
<dbReference type="FunFam" id="2.30.30.360:FF:000001">
    <property type="entry name" value="Myosin heavy chain"/>
    <property type="match status" value="1"/>
</dbReference>
<dbReference type="FunFam" id="3.40.850.10:FF:000024">
    <property type="entry name" value="Myosin heavy chain, isoform J"/>
    <property type="match status" value="1"/>
</dbReference>
<dbReference type="FunFam" id="1.20.120.720:FF:000001">
    <property type="entry name" value="Myosin heavy chain, muscle"/>
    <property type="match status" value="1"/>
</dbReference>
<dbReference type="Gene3D" id="1.10.10.820">
    <property type="match status" value="1"/>
</dbReference>
<dbReference type="Gene3D" id="1.20.5.340">
    <property type="match status" value="5"/>
</dbReference>
<dbReference type="Gene3D" id="1.20.5.370">
    <property type="match status" value="4"/>
</dbReference>
<dbReference type="Gene3D" id="1.20.5.4820">
    <property type="match status" value="1"/>
</dbReference>
<dbReference type="Gene3D" id="1.20.58.530">
    <property type="match status" value="1"/>
</dbReference>
<dbReference type="Gene3D" id="6.10.250.2420">
    <property type="match status" value="1"/>
</dbReference>
<dbReference type="Gene3D" id="3.40.850.10">
    <property type="entry name" value="Kinesin motor domain"/>
    <property type="match status" value="1"/>
</dbReference>
<dbReference type="Gene3D" id="2.30.30.360">
    <property type="entry name" value="Myosin S1 fragment, N-terminal"/>
    <property type="match status" value="1"/>
</dbReference>
<dbReference type="Gene3D" id="1.20.120.720">
    <property type="entry name" value="Myosin VI head, motor domain, U50 subdomain"/>
    <property type="match status" value="1"/>
</dbReference>
<dbReference type="InterPro" id="IPR036961">
    <property type="entry name" value="Kinesin_motor_dom_sf"/>
</dbReference>
<dbReference type="InterPro" id="IPR042702">
    <property type="entry name" value="Myh13_MYSc"/>
</dbReference>
<dbReference type="InterPro" id="IPR001609">
    <property type="entry name" value="Myosin_head_motor_dom-like"/>
</dbReference>
<dbReference type="InterPro" id="IPR004009">
    <property type="entry name" value="Myosin_N"/>
</dbReference>
<dbReference type="InterPro" id="IPR008989">
    <property type="entry name" value="Myosin_S1_N"/>
</dbReference>
<dbReference type="InterPro" id="IPR002928">
    <property type="entry name" value="Myosin_tail"/>
</dbReference>
<dbReference type="InterPro" id="IPR027417">
    <property type="entry name" value="P-loop_NTPase"/>
</dbReference>
<dbReference type="InterPro" id="IPR014751">
    <property type="entry name" value="XRCC4-like_C"/>
</dbReference>
<dbReference type="PANTHER" id="PTHR45615">
    <property type="entry name" value="MYOSIN HEAVY CHAIN, NON-MUSCLE"/>
    <property type="match status" value="1"/>
</dbReference>
<dbReference type="PANTHER" id="PTHR45615:SF64">
    <property type="entry name" value="MYOSIN-13"/>
    <property type="match status" value="1"/>
</dbReference>
<dbReference type="Pfam" id="PF00063">
    <property type="entry name" value="Myosin_head"/>
    <property type="match status" value="1"/>
</dbReference>
<dbReference type="Pfam" id="PF02736">
    <property type="entry name" value="Myosin_N"/>
    <property type="match status" value="1"/>
</dbReference>
<dbReference type="Pfam" id="PF01576">
    <property type="entry name" value="Myosin_tail_1"/>
    <property type="match status" value="1"/>
</dbReference>
<dbReference type="PRINTS" id="PR00193">
    <property type="entry name" value="MYOSINHEAVY"/>
</dbReference>
<dbReference type="SMART" id="SM00242">
    <property type="entry name" value="MYSc"/>
    <property type="match status" value="1"/>
</dbReference>
<dbReference type="SUPFAM" id="SSF90257">
    <property type="entry name" value="Myosin rod fragments"/>
    <property type="match status" value="6"/>
</dbReference>
<dbReference type="SUPFAM" id="SSF52540">
    <property type="entry name" value="P-loop containing nucleoside triphosphate hydrolases"/>
    <property type="match status" value="1"/>
</dbReference>
<dbReference type="SUPFAM" id="SSF57997">
    <property type="entry name" value="Tropomyosin"/>
    <property type="match status" value="1"/>
</dbReference>
<dbReference type="PROSITE" id="PS50096">
    <property type="entry name" value="IQ"/>
    <property type="match status" value="1"/>
</dbReference>
<dbReference type="PROSITE" id="PS51456">
    <property type="entry name" value="MYOSIN_MOTOR"/>
    <property type="match status" value="1"/>
</dbReference>
<dbReference type="PROSITE" id="PS51844">
    <property type="entry name" value="SH3_LIKE"/>
    <property type="match status" value="1"/>
</dbReference>